<dbReference type="EMBL" id="CP000539">
    <property type="protein sequence ID" value="ABM40648.1"/>
    <property type="molecule type" value="Genomic_DNA"/>
</dbReference>
<dbReference type="SMR" id="A1W323"/>
<dbReference type="STRING" id="232721.Ajs_0396"/>
<dbReference type="KEGG" id="ajs:Ajs_0396"/>
<dbReference type="eggNOG" id="COG0097">
    <property type="taxonomic scope" value="Bacteria"/>
</dbReference>
<dbReference type="HOGENOM" id="CLU_065464_1_2_4"/>
<dbReference type="Proteomes" id="UP000000645">
    <property type="component" value="Chromosome"/>
</dbReference>
<dbReference type="GO" id="GO:0022625">
    <property type="term" value="C:cytosolic large ribosomal subunit"/>
    <property type="evidence" value="ECO:0007669"/>
    <property type="project" value="TreeGrafter"/>
</dbReference>
<dbReference type="GO" id="GO:0019843">
    <property type="term" value="F:rRNA binding"/>
    <property type="evidence" value="ECO:0007669"/>
    <property type="project" value="UniProtKB-UniRule"/>
</dbReference>
<dbReference type="GO" id="GO:0003735">
    <property type="term" value="F:structural constituent of ribosome"/>
    <property type="evidence" value="ECO:0007669"/>
    <property type="project" value="InterPro"/>
</dbReference>
<dbReference type="GO" id="GO:0002181">
    <property type="term" value="P:cytoplasmic translation"/>
    <property type="evidence" value="ECO:0007669"/>
    <property type="project" value="TreeGrafter"/>
</dbReference>
<dbReference type="FunFam" id="3.90.930.12:FF:000001">
    <property type="entry name" value="50S ribosomal protein L6"/>
    <property type="match status" value="1"/>
</dbReference>
<dbReference type="FunFam" id="3.90.930.12:FF:000002">
    <property type="entry name" value="50S ribosomal protein L6"/>
    <property type="match status" value="1"/>
</dbReference>
<dbReference type="Gene3D" id="3.90.930.12">
    <property type="entry name" value="Ribosomal protein L6, alpha-beta domain"/>
    <property type="match status" value="2"/>
</dbReference>
<dbReference type="HAMAP" id="MF_01365_B">
    <property type="entry name" value="Ribosomal_uL6_B"/>
    <property type="match status" value="1"/>
</dbReference>
<dbReference type="InterPro" id="IPR000702">
    <property type="entry name" value="Ribosomal_uL6-like"/>
</dbReference>
<dbReference type="InterPro" id="IPR036789">
    <property type="entry name" value="Ribosomal_uL6-like_a/b-dom_sf"/>
</dbReference>
<dbReference type="InterPro" id="IPR020040">
    <property type="entry name" value="Ribosomal_uL6_a/b-dom"/>
</dbReference>
<dbReference type="InterPro" id="IPR019906">
    <property type="entry name" value="Ribosomal_uL6_bac-type"/>
</dbReference>
<dbReference type="InterPro" id="IPR002358">
    <property type="entry name" value="Ribosomal_uL6_CS"/>
</dbReference>
<dbReference type="NCBIfam" id="TIGR03654">
    <property type="entry name" value="L6_bact"/>
    <property type="match status" value="1"/>
</dbReference>
<dbReference type="PANTHER" id="PTHR11655">
    <property type="entry name" value="60S/50S RIBOSOMAL PROTEIN L6/L9"/>
    <property type="match status" value="1"/>
</dbReference>
<dbReference type="PANTHER" id="PTHR11655:SF14">
    <property type="entry name" value="LARGE RIBOSOMAL SUBUNIT PROTEIN UL6M"/>
    <property type="match status" value="1"/>
</dbReference>
<dbReference type="Pfam" id="PF00347">
    <property type="entry name" value="Ribosomal_L6"/>
    <property type="match status" value="2"/>
</dbReference>
<dbReference type="PIRSF" id="PIRSF002162">
    <property type="entry name" value="Ribosomal_L6"/>
    <property type="match status" value="1"/>
</dbReference>
<dbReference type="PRINTS" id="PR00059">
    <property type="entry name" value="RIBOSOMALL6"/>
</dbReference>
<dbReference type="SUPFAM" id="SSF56053">
    <property type="entry name" value="Ribosomal protein L6"/>
    <property type="match status" value="2"/>
</dbReference>
<dbReference type="PROSITE" id="PS00525">
    <property type="entry name" value="RIBOSOMAL_L6_1"/>
    <property type="match status" value="1"/>
</dbReference>
<gene>
    <name evidence="1" type="primary">rplF</name>
    <name type="ordered locus">Ajs_0396</name>
</gene>
<reference key="1">
    <citation type="submission" date="2006-12" db="EMBL/GenBank/DDBJ databases">
        <title>Complete sequence of chromosome 1 of Acidovorax sp. JS42.</title>
        <authorList>
            <person name="Copeland A."/>
            <person name="Lucas S."/>
            <person name="Lapidus A."/>
            <person name="Barry K."/>
            <person name="Detter J.C."/>
            <person name="Glavina del Rio T."/>
            <person name="Dalin E."/>
            <person name="Tice H."/>
            <person name="Pitluck S."/>
            <person name="Chertkov O."/>
            <person name="Brettin T."/>
            <person name="Bruce D."/>
            <person name="Han C."/>
            <person name="Tapia R."/>
            <person name="Gilna P."/>
            <person name="Schmutz J."/>
            <person name="Larimer F."/>
            <person name="Land M."/>
            <person name="Hauser L."/>
            <person name="Kyrpides N."/>
            <person name="Kim E."/>
            <person name="Stahl D."/>
            <person name="Richardson P."/>
        </authorList>
    </citation>
    <scope>NUCLEOTIDE SEQUENCE [LARGE SCALE GENOMIC DNA]</scope>
    <source>
        <strain>JS42</strain>
    </source>
</reference>
<proteinExistence type="inferred from homology"/>
<accession>A1W323</accession>
<name>RL6_ACISJ</name>
<sequence>MSRVGKSPVSIPAGVDVSIKDDQISVKGAGGVLSLAQNALVKVSNNEGKLSFEPVNDSREANAMSGTVRQLVNNMVVGVSKGFEKKLTLIGVGFKAAASGNKLNLAIGFSHPVNFEMPTGITVATPTPTEIVIKGADRQVVGQLAAEIRAVRPPEPYKGKGIRYADEKVTIKETKKK</sequence>
<feature type="chain" id="PRO_1000055187" description="Large ribosomal subunit protein uL6">
    <location>
        <begin position="1"/>
        <end position="177"/>
    </location>
</feature>
<keyword id="KW-0687">Ribonucleoprotein</keyword>
<keyword id="KW-0689">Ribosomal protein</keyword>
<keyword id="KW-0694">RNA-binding</keyword>
<keyword id="KW-0699">rRNA-binding</keyword>
<protein>
    <recommendedName>
        <fullName evidence="1">Large ribosomal subunit protein uL6</fullName>
    </recommendedName>
    <alternativeName>
        <fullName evidence="2">50S ribosomal protein L6</fullName>
    </alternativeName>
</protein>
<comment type="function">
    <text evidence="1">This protein binds to the 23S rRNA, and is important in its secondary structure. It is located near the subunit interface in the base of the L7/L12 stalk, and near the tRNA binding site of the peptidyltransferase center.</text>
</comment>
<comment type="subunit">
    <text evidence="1">Part of the 50S ribosomal subunit.</text>
</comment>
<comment type="similarity">
    <text evidence="1">Belongs to the universal ribosomal protein uL6 family.</text>
</comment>
<organism>
    <name type="scientific">Acidovorax sp. (strain JS42)</name>
    <dbReference type="NCBI Taxonomy" id="232721"/>
    <lineage>
        <taxon>Bacteria</taxon>
        <taxon>Pseudomonadati</taxon>
        <taxon>Pseudomonadota</taxon>
        <taxon>Betaproteobacteria</taxon>
        <taxon>Burkholderiales</taxon>
        <taxon>Comamonadaceae</taxon>
        <taxon>Acidovorax</taxon>
    </lineage>
</organism>
<evidence type="ECO:0000255" key="1">
    <source>
        <dbReference type="HAMAP-Rule" id="MF_01365"/>
    </source>
</evidence>
<evidence type="ECO:0000305" key="2"/>